<evidence type="ECO:0000255" key="1">
    <source>
        <dbReference type="HAMAP-Rule" id="MF_00009"/>
    </source>
</evidence>
<gene>
    <name evidence="1" type="primary">ybeY</name>
    <name type="ordered locus">SpyM51480</name>
</gene>
<sequence length="165" mass="19197">MYIEMIDETGQVSQEIMEQTLDLLNFAAQKTGKEEKEMSVTFVTNERSHELNLEYRDTDRPTDVISLEYKPETPILFSQEDLAADPSLAEMMAEFDAYIGELFISIDKAREQSQEYGHSFEREMGFLAVHGFLHINGYDHYTLEEEKEMFTLQEEILTAYGLTRQ</sequence>
<accession>A2RG22</accession>
<feature type="chain" id="PRO_1000000747" description="Endoribonuclease YbeY">
    <location>
        <begin position="1"/>
        <end position="165"/>
    </location>
</feature>
<feature type="binding site" evidence="1">
    <location>
        <position position="130"/>
    </location>
    <ligand>
        <name>Zn(2+)</name>
        <dbReference type="ChEBI" id="CHEBI:29105"/>
        <note>catalytic</note>
    </ligand>
</feature>
<feature type="binding site" evidence="1">
    <location>
        <position position="134"/>
    </location>
    <ligand>
        <name>Zn(2+)</name>
        <dbReference type="ChEBI" id="CHEBI:29105"/>
        <note>catalytic</note>
    </ligand>
</feature>
<feature type="binding site" evidence="1">
    <location>
        <position position="140"/>
    </location>
    <ligand>
        <name>Zn(2+)</name>
        <dbReference type="ChEBI" id="CHEBI:29105"/>
        <note>catalytic</note>
    </ligand>
</feature>
<name>YBEY_STRPG</name>
<reference key="1">
    <citation type="journal article" date="2007" name="J. Bacteriol.">
        <title>Complete genome of acute rheumatic fever-associated serotype M5 Streptococcus pyogenes strain Manfredo.</title>
        <authorList>
            <person name="Holden M.T.G."/>
            <person name="Scott A."/>
            <person name="Cherevach I."/>
            <person name="Chillingworth T."/>
            <person name="Churcher C."/>
            <person name="Cronin A."/>
            <person name="Dowd L."/>
            <person name="Feltwell T."/>
            <person name="Hamlin N."/>
            <person name="Holroyd S."/>
            <person name="Jagels K."/>
            <person name="Moule S."/>
            <person name="Mungall K."/>
            <person name="Quail M.A."/>
            <person name="Price C."/>
            <person name="Rabbinowitsch E."/>
            <person name="Sharp S."/>
            <person name="Skelton J."/>
            <person name="Whitehead S."/>
            <person name="Barrell B.G."/>
            <person name="Kehoe M."/>
            <person name="Parkhill J."/>
        </authorList>
    </citation>
    <scope>NUCLEOTIDE SEQUENCE [LARGE SCALE GENOMIC DNA]</scope>
    <source>
        <strain>Manfredo</strain>
    </source>
</reference>
<dbReference type="EC" id="3.1.-.-" evidence="1"/>
<dbReference type="EMBL" id="AM295007">
    <property type="protein sequence ID" value="CAM30801.1"/>
    <property type="molecule type" value="Genomic_DNA"/>
</dbReference>
<dbReference type="RefSeq" id="WP_002985748.1">
    <property type="nucleotide sequence ID" value="NC_009332.1"/>
</dbReference>
<dbReference type="SMR" id="A2RG22"/>
<dbReference type="GeneID" id="69901291"/>
<dbReference type="KEGG" id="spf:SpyM51480"/>
<dbReference type="HOGENOM" id="CLU_106710_3_0_9"/>
<dbReference type="GO" id="GO:0005737">
    <property type="term" value="C:cytoplasm"/>
    <property type="evidence" value="ECO:0007669"/>
    <property type="project" value="UniProtKB-SubCell"/>
</dbReference>
<dbReference type="GO" id="GO:0004222">
    <property type="term" value="F:metalloendopeptidase activity"/>
    <property type="evidence" value="ECO:0007669"/>
    <property type="project" value="InterPro"/>
</dbReference>
<dbReference type="GO" id="GO:0004521">
    <property type="term" value="F:RNA endonuclease activity"/>
    <property type="evidence" value="ECO:0007669"/>
    <property type="project" value="UniProtKB-UniRule"/>
</dbReference>
<dbReference type="GO" id="GO:0008270">
    <property type="term" value="F:zinc ion binding"/>
    <property type="evidence" value="ECO:0007669"/>
    <property type="project" value="UniProtKB-UniRule"/>
</dbReference>
<dbReference type="GO" id="GO:0006364">
    <property type="term" value="P:rRNA processing"/>
    <property type="evidence" value="ECO:0007669"/>
    <property type="project" value="UniProtKB-UniRule"/>
</dbReference>
<dbReference type="Gene3D" id="3.40.390.30">
    <property type="entry name" value="Metalloproteases ('zincins'), catalytic domain"/>
    <property type="match status" value="1"/>
</dbReference>
<dbReference type="HAMAP" id="MF_00009">
    <property type="entry name" value="Endoribonucl_YbeY"/>
    <property type="match status" value="1"/>
</dbReference>
<dbReference type="InterPro" id="IPR023091">
    <property type="entry name" value="MetalPrtase_cat_dom_sf_prd"/>
</dbReference>
<dbReference type="InterPro" id="IPR002036">
    <property type="entry name" value="YbeY"/>
</dbReference>
<dbReference type="InterPro" id="IPR020549">
    <property type="entry name" value="YbeY_CS"/>
</dbReference>
<dbReference type="NCBIfam" id="TIGR00043">
    <property type="entry name" value="rRNA maturation RNase YbeY"/>
    <property type="match status" value="1"/>
</dbReference>
<dbReference type="PANTHER" id="PTHR46986">
    <property type="entry name" value="ENDORIBONUCLEASE YBEY, CHLOROPLASTIC"/>
    <property type="match status" value="1"/>
</dbReference>
<dbReference type="PANTHER" id="PTHR46986:SF1">
    <property type="entry name" value="ENDORIBONUCLEASE YBEY, CHLOROPLASTIC"/>
    <property type="match status" value="1"/>
</dbReference>
<dbReference type="Pfam" id="PF02130">
    <property type="entry name" value="YbeY"/>
    <property type="match status" value="1"/>
</dbReference>
<dbReference type="SUPFAM" id="SSF55486">
    <property type="entry name" value="Metalloproteases ('zincins'), catalytic domain"/>
    <property type="match status" value="1"/>
</dbReference>
<dbReference type="PROSITE" id="PS01306">
    <property type="entry name" value="UPF0054"/>
    <property type="match status" value="1"/>
</dbReference>
<proteinExistence type="inferred from homology"/>
<comment type="function">
    <text evidence="1">Single strand-specific metallo-endoribonuclease involved in late-stage 70S ribosome quality control and in maturation of the 3' terminus of the 16S rRNA.</text>
</comment>
<comment type="cofactor">
    <cofactor evidence="1">
        <name>Zn(2+)</name>
        <dbReference type="ChEBI" id="CHEBI:29105"/>
    </cofactor>
    <text evidence="1">Binds 1 zinc ion.</text>
</comment>
<comment type="subcellular location">
    <subcellularLocation>
        <location evidence="1">Cytoplasm</location>
    </subcellularLocation>
</comment>
<comment type="similarity">
    <text evidence="1">Belongs to the endoribonuclease YbeY family.</text>
</comment>
<organism>
    <name type="scientific">Streptococcus pyogenes serotype M5 (strain Manfredo)</name>
    <dbReference type="NCBI Taxonomy" id="160491"/>
    <lineage>
        <taxon>Bacteria</taxon>
        <taxon>Bacillati</taxon>
        <taxon>Bacillota</taxon>
        <taxon>Bacilli</taxon>
        <taxon>Lactobacillales</taxon>
        <taxon>Streptococcaceae</taxon>
        <taxon>Streptococcus</taxon>
    </lineage>
</organism>
<protein>
    <recommendedName>
        <fullName evidence="1">Endoribonuclease YbeY</fullName>
        <ecNumber evidence="1">3.1.-.-</ecNumber>
    </recommendedName>
</protein>
<keyword id="KW-0963">Cytoplasm</keyword>
<keyword id="KW-0255">Endonuclease</keyword>
<keyword id="KW-0378">Hydrolase</keyword>
<keyword id="KW-0479">Metal-binding</keyword>
<keyword id="KW-0540">Nuclease</keyword>
<keyword id="KW-0690">Ribosome biogenesis</keyword>
<keyword id="KW-0698">rRNA processing</keyword>
<keyword id="KW-0862">Zinc</keyword>